<evidence type="ECO:0000250" key="1"/>
<evidence type="ECO:0000255" key="2">
    <source>
        <dbReference type="HAMAP-Rule" id="MF_01109"/>
    </source>
</evidence>
<name>OTC_IGNH4</name>
<comment type="function">
    <text evidence="1">Reversibly catalyzes the transfer of the carbamoyl group from carbamoyl phosphate (CP) to the N(epsilon) atom of ornithine (ORN) to produce L-citrulline.</text>
</comment>
<comment type="catalytic activity">
    <reaction evidence="2">
        <text>carbamoyl phosphate + L-ornithine = L-citrulline + phosphate + H(+)</text>
        <dbReference type="Rhea" id="RHEA:19513"/>
        <dbReference type="ChEBI" id="CHEBI:15378"/>
        <dbReference type="ChEBI" id="CHEBI:43474"/>
        <dbReference type="ChEBI" id="CHEBI:46911"/>
        <dbReference type="ChEBI" id="CHEBI:57743"/>
        <dbReference type="ChEBI" id="CHEBI:58228"/>
        <dbReference type="EC" id="2.1.3.3"/>
    </reaction>
</comment>
<comment type="pathway">
    <text evidence="2">Amino-acid degradation; L-arginine degradation via ADI pathway; carbamoyl phosphate from L-arginine: step 2/2.</text>
</comment>
<comment type="subcellular location">
    <subcellularLocation>
        <location evidence="2">Cytoplasm</location>
    </subcellularLocation>
</comment>
<comment type="similarity">
    <text evidence="2">Belongs to the aspartate/ornithine carbamoyltransferase superfamily. OTCase family.</text>
</comment>
<gene>
    <name evidence="2" type="primary">arcB</name>
    <name type="ordered locus">Igni_1387</name>
</gene>
<proteinExistence type="inferred from homology"/>
<feature type="chain" id="PRO_1000213568" description="Ornithine carbamoyltransferase">
    <location>
        <begin position="1"/>
        <end position="311"/>
    </location>
</feature>
<feature type="binding site" evidence="2">
    <location>
        <begin position="56"/>
        <end position="59"/>
    </location>
    <ligand>
        <name>carbamoyl phosphate</name>
        <dbReference type="ChEBI" id="CHEBI:58228"/>
    </ligand>
</feature>
<feature type="binding site" evidence="2">
    <location>
        <position position="83"/>
    </location>
    <ligand>
        <name>carbamoyl phosphate</name>
        <dbReference type="ChEBI" id="CHEBI:58228"/>
    </ligand>
</feature>
<feature type="binding site" evidence="2">
    <location>
        <position position="107"/>
    </location>
    <ligand>
        <name>carbamoyl phosphate</name>
        <dbReference type="ChEBI" id="CHEBI:58228"/>
    </ligand>
</feature>
<feature type="binding site" evidence="2">
    <location>
        <begin position="134"/>
        <end position="137"/>
    </location>
    <ligand>
        <name>carbamoyl phosphate</name>
        <dbReference type="ChEBI" id="CHEBI:58228"/>
    </ligand>
</feature>
<feature type="binding site" evidence="2">
    <location>
        <position position="166"/>
    </location>
    <ligand>
        <name>L-ornithine</name>
        <dbReference type="ChEBI" id="CHEBI:46911"/>
    </ligand>
</feature>
<feature type="binding site" evidence="2">
    <location>
        <position position="230"/>
    </location>
    <ligand>
        <name>L-ornithine</name>
        <dbReference type="ChEBI" id="CHEBI:46911"/>
    </ligand>
</feature>
<feature type="binding site" evidence="2">
    <location>
        <begin position="234"/>
        <end position="235"/>
    </location>
    <ligand>
        <name>L-ornithine</name>
        <dbReference type="ChEBI" id="CHEBI:46911"/>
    </ligand>
</feature>
<feature type="binding site" evidence="2">
    <location>
        <begin position="270"/>
        <end position="271"/>
    </location>
    <ligand>
        <name>carbamoyl phosphate</name>
        <dbReference type="ChEBI" id="CHEBI:58228"/>
    </ligand>
</feature>
<feature type="binding site" evidence="2">
    <location>
        <position position="298"/>
    </location>
    <ligand>
        <name>carbamoyl phosphate</name>
        <dbReference type="ChEBI" id="CHEBI:58228"/>
    </ligand>
</feature>
<dbReference type="EC" id="2.1.3.3" evidence="2"/>
<dbReference type="EMBL" id="CP000816">
    <property type="protein sequence ID" value="ABU82563.1"/>
    <property type="molecule type" value="Genomic_DNA"/>
</dbReference>
<dbReference type="RefSeq" id="WP_012123527.1">
    <property type="nucleotide sequence ID" value="NC_009776.1"/>
</dbReference>
<dbReference type="SMR" id="A8ACB1"/>
<dbReference type="STRING" id="453591.Igni_1387"/>
<dbReference type="GeneID" id="5562039"/>
<dbReference type="KEGG" id="iho:Igni_1387"/>
<dbReference type="eggNOG" id="arCOG00912">
    <property type="taxonomic scope" value="Archaea"/>
</dbReference>
<dbReference type="HOGENOM" id="CLU_043846_3_2_2"/>
<dbReference type="OrthoDB" id="4696at2157"/>
<dbReference type="PhylomeDB" id="A8ACB1"/>
<dbReference type="UniPathway" id="UPA00254">
    <property type="reaction ID" value="UER00365"/>
</dbReference>
<dbReference type="Proteomes" id="UP000000262">
    <property type="component" value="Chromosome"/>
</dbReference>
<dbReference type="GO" id="GO:0005737">
    <property type="term" value="C:cytoplasm"/>
    <property type="evidence" value="ECO:0007669"/>
    <property type="project" value="UniProtKB-SubCell"/>
</dbReference>
<dbReference type="GO" id="GO:0016597">
    <property type="term" value="F:amino acid binding"/>
    <property type="evidence" value="ECO:0007669"/>
    <property type="project" value="InterPro"/>
</dbReference>
<dbReference type="GO" id="GO:0004585">
    <property type="term" value="F:ornithine carbamoyltransferase activity"/>
    <property type="evidence" value="ECO:0007669"/>
    <property type="project" value="UniProtKB-UniRule"/>
</dbReference>
<dbReference type="GO" id="GO:0042450">
    <property type="term" value="P:arginine biosynthetic process via ornithine"/>
    <property type="evidence" value="ECO:0007669"/>
    <property type="project" value="TreeGrafter"/>
</dbReference>
<dbReference type="GO" id="GO:0019547">
    <property type="term" value="P:arginine catabolic process to ornithine"/>
    <property type="evidence" value="ECO:0007669"/>
    <property type="project" value="UniProtKB-UniPathway"/>
</dbReference>
<dbReference type="GO" id="GO:0019240">
    <property type="term" value="P:citrulline biosynthetic process"/>
    <property type="evidence" value="ECO:0007669"/>
    <property type="project" value="TreeGrafter"/>
</dbReference>
<dbReference type="GO" id="GO:0006526">
    <property type="term" value="P:L-arginine biosynthetic process"/>
    <property type="evidence" value="ECO:0007669"/>
    <property type="project" value="UniProtKB-UniRule"/>
</dbReference>
<dbReference type="FunFam" id="3.40.50.1370:FF:000008">
    <property type="entry name" value="Ornithine carbamoyltransferase"/>
    <property type="match status" value="1"/>
</dbReference>
<dbReference type="Gene3D" id="3.40.50.1370">
    <property type="entry name" value="Aspartate/ornithine carbamoyltransferase"/>
    <property type="match status" value="2"/>
</dbReference>
<dbReference type="HAMAP" id="MF_01109">
    <property type="entry name" value="OTCase"/>
    <property type="match status" value="1"/>
</dbReference>
<dbReference type="InterPro" id="IPR006132">
    <property type="entry name" value="Asp/Orn_carbamoyltranf_P-bd"/>
</dbReference>
<dbReference type="InterPro" id="IPR006130">
    <property type="entry name" value="Asp/Orn_carbamoylTrfase"/>
</dbReference>
<dbReference type="InterPro" id="IPR036901">
    <property type="entry name" value="Asp/Orn_carbamoylTrfase_sf"/>
</dbReference>
<dbReference type="InterPro" id="IPR006131">
    <property type="entry name" value="Asp_carbamoyltransf_Asp/Orn-bd"/>
</dbReference>
<dbReference type="InterPro" id="IPR002292">
    <property type="entry name" value="Orn/put_carbamltrans"/>
</dbReference>
<dbReference type="InterPro" id="IPR024904">
    <property type="entry name" value="OTCase_ArgI"/>
</dbReference>
<dbReference type="NCBIfam" id="TIGR00658">
    <property type="entry name" value="orni_carb_tr"/>
    <property type="match status" value="1"/>
</dbReference>
<dbReference type="NCBIfam" id="NF001986">
    <property type="entry name" value="PRK00779.1"/>
    <property type="match status" value="1"/>
</dbReference>
<dbReference type="PANTHER" id="PTHR45753">
    <property type="entry name" value="ORNITHINE CARBAMOYLTRANSFERASE, MITOCHONDRIAL"/>
    <property type="match status" value="1"/>
</dbReference>
<dbReference type="PANTHER" id="PTHR45753:SF3">
    <property type="entry name" value="ORNITHINE TRANSCARBAMYLASE, MITOCHONDRIAL"/>
    <property type="match status" value="1"/>
</dbReference>
<dbReference type="Pfam" id="PF00185">
    <property type="entry name" value="OTCace"/>
    <property type="match status" value="1"/>
</dbReference>
<dbReference type="Pfam" id="PF02729">
    <property type="entry name" value="OTCace_N"/>
    <property type="match status" value="1"/>
</dbReference>
<dbReference type="PRINTS" id="PR00100">
    <property type="entry name" value="AOTCASE"/>
</dbReference>
<dbReference type="PRINTS" id="PR00102">
    <property type="entry name" value="OTCASE"/>
</dbReference>
<dbReference type="SUPFAM" id="SSF53671">
    <property type="entry name" value="Aspartate/ornithine carbamoyltransferase"/>
    <property type="match status" value="1"/>
</dbReference>
<dbReference type="PROSITE" id="PS00097">
    <property type="entry name" value="CARBAMOYLTRANSFERASE"/>
    <property type="match status" value="1"/>
</dbReference>
<sequence>MHLKGRSMLTLLDFAEDEIKFIVDTALQMKRENYAGRRYWGLLEGRHLALLFEKPSTRTRVAFEVAASQLGMSVSYVTKSDSQLSRGEPLKDAARVLGRYVDAIAARVKRHEDLETLVEHSGVPVINALSDKFHPTQAIADVMTILEKLGRVRGVKIAFVGDGADNVAHSLALAATSLGADVRIVTAPGYEPLDAVIAAAEERARRSGGSFELVYDPCKGVKGADVVYTDVWVSMGLEAEREKRLRDLRPYQVNSELLKCVGKDYIFMHCLPAHRGEEVTEEVLESSRSVVWDQAENKLHAQRAVLALLVP</sequence>
<protein>
    <recommendedName>
        <fullName evidence="2">Ornithine carbamoyltransferase</fullName>
        <shortName evidence="2">OTCase</shortName>
        <ecNumber evidence="2">2.1.3.3</ecNumber>
    </recommendedName>
</protein>
<organism>
    <name type="scientific">Ignicoccus hospitalis (strain KIN4/I / DSM 18386 / JCM 14125)</name>
    <dbReference type="NCBI Taxonomy" id="453591"/>
    <lineage>
        <taxon>Archaea</taxon>
        <taxon>Thermoproteota</taxon>
        <taxon>Thermoprotei</taxon>
        <taxon>Desulfurococcales</taxon>
        <taxon>Desulfurococcaceae</taxon>
        <taxon>Ignicoccus</taxon>
    </lineage>
</organism>
<accession>A8ACB1</accession>
<keyword id="KW-0056">Arginine metabolism</keyword>
<keyword id="KW-0963">Cytoplasm</keyword>
<keyword id="KW-1185">Reference proteome</keyword>
<keyword id="KW-0808">Transferase</keyword>
<reference key="1">
    <citation type="journal article" date="2008" name="Genome Biol.">
        <title>A genomic analysis of the archaeal system Ignicoccus hospitalis-Nanoarchaeum equitans.</title>
        <authorList>
            <person name="Podar M."/>
            <person name="Anderson I."/>
            <person name="Makarova K.S."/>
            <person name="Elkins J.G."/>
            <person name="Ivanova N."/>
            <person name="Wall M.A."/>
            <person name="Lykidis A."/>
            <person name="Mavromatis K."/>
            <person name="Sun H."/>
            <person name="Hudson M.E."/>
            <person name="Chen W."/>
            <person name="Deciu C."/>
            <person name="Hutchison D."/>
            <person name="Eads J.R."/>
            <person name="Anderson A."/>
            <person name="Fernandes F."/>
            <person name="Szeto E."/>
            <person name="Lapidus A."/>
            <person name="Kyrpides N.C."/>
            <person name="Saier M.H. Jr."/>
            <person name="Richardson P.M."/>
            <person name="Rachel R."/>
            <person name="Huber H."/>
            <person name="Eisen J.A."/>
            <person name="Koonin E.V."/>
            <person name="Keller M."/>
            <person name="Stetter K.O."/>
        </authorList>
    </citation>
    <scope>NUCLEOTIDE SEQUENCE [LARGE SCALE GENOMIC DNA]</scope>
    <source>
        <strain>KIN4/I / DSM 18386 / JCM 14125</strain>
    </source>
</reference>